<proteinExistence type="inferred from homology"/>
<feature type="initiator methionine" description="Removed" evidence="4">
    <location>
        <position position="1"/>
    </location>
</feature>
<feature type="chain" id="PRO_0000203668" description="Guanine nucleotide-binding protein subunit alpha-1">
    <location>
        <begin position="2"/>
        <end position="402"/>
    </location>
</feature>
<feature type="domain" description="G-alpha" evidence="5">
    <location>
        <begin position="82"/>
        <end position="402"/>
    </location>
</feature>
<feature type="region of interest" description="Disordered" evidence="6">
    <location>
        <begin position="1"/>
        <end position="70"/>
    </location>
</feature>
<feature type="region of interest" description="G1 motif" evidence="5">
    <location>
        <begin position="85"/>
        <end position="98"/>
    </location>
</feature>
<feature type="region of interest" description="G2 motif" evidence="5">
    <location>
        <begin position="221"/>
        <end position="229"/>
    </location>
</feature>
<feature type="region of interest" description="G3 motif" evidence="5">
    <location>
        <begin position="244"/>
        <end position="253"/>
    </location>
</feature>
<feature type="region of interest" description="G4 motif" evidence="5">
    <location>
        <begin position="313"/>
        <end position="320"/>
    </location>
</feature>
<feature type="region of interest" description="G5 motif" evidence="5">
    <location>
        <begin position="375"/>
        <end position="380"/>
    </location>
</feature>
<feature type="compositionally biased region" description="Polar residues" evidence="6">
    <location>
        <begin position="1"/>
        <end position="12"/>
    </location>
</feature>
<feature type="compositionally biased region" description="Basic and acidic residues" evidence="6">
    <location>
        <begin position="23"/>
        <end position="33"/>
    </location>
</feature>
<feature type="compositionally biased region" description="Pro residues" evidence="6">
    <location>
        <begin position="34"/>
        <end position="69"/>
    </location>
</feature>
<feature type="binding site" evidence="3">
    <location>
        <position position="93"/>
    </location>
    <ligand>
        <name>GTP</name>
        <dbReference type="ChEBI" id="CHEBI:37565"/>
    </ligand>
</feature>
<feature type="binding site" evidence="3">
    <location>
        <position position="94"/>
    </location>
    <ligand>
        <name>GTP</name>
        <dbReference type="ChEBI" id="CHEBI:37565"/>
    </ligand>
</feature>
<feature type="binding site" evidence="3">
    <location>
        <position position="95"/>
    </location>
    <ligand>
        <name>GTP</name>
        <dbReference type="ChEBI" id="CHEBI:37565"/>
    </ligand>
</feature>
<feature type="binding site" evidence="3">
    <location>
        <position position="96"/>
    </location>
    <ligand>
        <name>GTP</name>
        <dbReference type="ChEBI" id="CHEBI:37565"/>
    </ligand>
</feature>
<feature type="binding site" evidence="3">
    <location>
        <position position="97"/>
    </location>
    <ligand>
        <name>GTP</name>
        <dbReference type="ChEBI" id="CHEBI:37565"/>
    </ligand>
</feature>
<feature type="binding site" evidence="3">
    <location>
        <position position="97"/>
    </location>
    <ligand>
        <name>Mg(2+)</name>
        <dbReference type="ChEBI" id="CHEBI:18420"/>
    </ligand>
</feature>
<feature type="binding site" evidence="3">
    <location>
        <position position="98"/>
    </location>
    <ligand>
        <name>GTP</name>
        <dbReference type="ChEBI" id="CHEBI:37565"/>
    </ligand>
</feature>
<feature type="binding site" evidence="3">
    <location>
        <position position="198"/>
    </location>
    <ligand>
        <name>GTP</name>
        <dbReference type="ChEBI" id="CHEBI:37565"/>
    </ligand>
</feature>
<feature type="binding site" evidence="3">
    <location>
        <position position="223"/>
    </location>
    <ligand>
        <name>GTP</name>
        <dbReference type="ChEBI" id="CHEBI:37565"/>
    </ligand>
</feature>
<feature type="binding site" evidence="3">
    <location>
        <position position="229"/>
    </location>
    <ligand>
        <name>GTP</name>
        <dbReference type="ChEBI" id="CHEBI:37565"/>
    </ligand>
</feature>
<feature type="binding site" evidence="3">
    <location>
        <position position="229"/>
    </location>
    <ligand>
        <name>Mg(2+)</name>
        <dbReference type="ChEBI" id="CHEBI:18420"/>
    </ligand>
</feature>
<feature type="binding site" evidence="3">
    <location>
        <position position="251"/>
    </location>
    <ligand>
        <name>GTP</name>
        <dbReference type="ChEBI" id="CHEBI:37565"/>
    </ligand>
</feature>
<feature type="binding site" evidence="3">
    <location>
        <position position="317"/>
    </location>
    <ligand>
        <name>GTP</name>
        <dbReference type="ChEBI" id="CHEBI:37565"/>
    </ligand>
</feature>
<feature type="binding site" evidence="3">
    <location>
        <position position="318"/>
    </location>
    <ligand>
        <name>GTP</name>
        <dbReference type="ChEBI" id="CHEBI:37565"/>
    </ligand>
</feature>
<feature type="binding site" evidence="3">
    <location>
        <position position="320"/>
    </location>
    <ligand>
        <name>GTP</name>
        <dbReference type="ChEBI" id="CHEBI:37565"/>
    </ligand>
</feature>
<feature type="binding site" evidence="3">
    <location>
        <position position="377"/>
    </location>
    <ligand>
        <name>GTP</name>
        <dbReference type="ChEBI" id="CHEBI:37565"/>
    </ligand>
</feature>
<feature type="lipid moiety-binding region" description="N-myristoyl glycine" evidence="2">
    <location>
        <position position="2"/>
    </location>
</feature>
<feature type="lipid moiety-binding region" description="S-palmitoyl cysteine" evidence="2">
    <location>
        <position position="3"/>
    </location>
</feature>
<name>GPA1_TRIVA</name>
<accession>Q86D96</accession>
<gene>
    <name type="primary">GA1</name>
</gene>
<reference key="1">
    <citation type="journal article" date="2003" name="Mol. Biochem. Parasitol.">
        <title>Biochemical and genetic evidence for a family of heterotrimeric G-proteins in Trichomonas vaginalis.</title>
        <authorList>
            <person name="Hirt R.P."/>
            <person name="Lal K."/>
            <person name="Pinxteren J."/>
            <person name="Warwicker J."/>
            <person name="Healy B."/>
            <person name="Coombs G.H."/>
            <person name="Field M.C."/>
            <person name="Embley T.M."/>
        </authorList>
    </citation>
    <scope>NUCLEOTIDE SEQUENCE [GENOMIC DNA]</scope>
    <source>
        <strain>ATCC PRA-98 / G3</strain>
    </source>
</reference>
<evidence type="ECO:0000250" key="1"/>
<evidence type="ECO:0000250" key="2">
    <source>
        <dbReference type="UniProtKB" id="P08539"/>
    </source>
</evidence>
<evidence type="ECO:0000250" key="3">
    <source>
        <dbReference type="UniProtKB" id="P18064"/>
    </source>
</evidence>
<evidence type="ECO:0000255" key="4"/>
<evidence type="ECO:0000255" key="5">
    <source>
        <dbReference type="PROSITE-ProRule" id="PRU01230"/>
    </source>
</evidence>
<evidence type="ECO:0000256" key="6">
    <source>
        <dbReference type="SAM" id="MobiDB-lite"/>
    </source>
</evidence>
<evidence type="ECO:0000305" key="7"/>
<organism>
    <name type="scientific">Trichomonas vaginalis</name>
    <dbReference type="NCBI Taxonomy" id="5722"/>
    <lineage>
        <taxon>Eukaryota</taxon>
        <taxon>Metamonada</taxon>
        <taxon>Parabasalia</taxon>
        <taxon>Trichomonadida</taxon>
        <taxon>Trichomonadidae</taxon>
        <taxon>Trichomonas</taxon>
    </lineage>
</organism>
<sequence length="402" mass="45231">MGCSASKPSEPSNAKLPSAPVPKKVEQVPEPKPEPQPQPEPQPQPEPPKPAEPAPAPAPAPEPQKPAEPAPKVVAVEDDTNEAYGLLLCGAGESGKTTFTRQLKLRYLNGFNEKDCRDFLRTIRGNLVETMQLLLVWLEHNNIEIEDSELSSMAQDIIDVDPQDCEFNEELVEKLKALWENEQIKKAFEHKDETAVPDHMPYFFAKIDELAGEDYIPSNEDVLRARIRSIGIEAITFDLQGARIRIFDVGGQKSERSKWANVMNQVEGVIFCVSFAEFDKPMFEDQNVLRINDSLEIFGNITHQEKFSNSPIFLVCNKFDVFTEKIKNTDAFVKIFPEFSGDSHNPEACADYLIQRFLDKAAPLSEDRPIIQYKIVALNGDQVVETADAICKFISDKYYQDA</sequence>
<dbReference type="EMBL" id="AY138840">
    <property type="protein sequence ID" value="AAN39541.1"/>
    <property type="molecule type" value="Genomic_DNA"/>
</dbReference>
<dbReference type="SMR" id="Q86D96"/>
<dbReference type="VEuPathDB" id="TrichDB:TVAG_452120"/>
<dbReference type="VEuPathDB" id="TrichDB:TVAGG3_0290150"/>
<dbReference type="eggNOG" id="KOG0082">
    <property type="taxonomic scope" value="Eukaryota"/>
</dbReference>
<dbReference type="OMA" id="NCFGESD"/>
<dbReference type="GO" id="GO:0012505">
    <property type="term" value="C:endomembrane system"/>
    <property type="evidence" value="ECO:0007669"/>
    <property type="project" value="UniProtKB-SubCell"/>
</dbReference>
<dbReference type="GO" id="GO:0005834">
    <property type="term" value="C:heterotrimeric G-protein complex"/>
    <property type="evidence" value="ECO:0007669"/>
    <property type="project" value="TreeGrafter"/>
</dbReference>
<dbReference type="GO" id="GO:0048471">
    <property type="term" value="C:perinuclear region of cytoplasm"/>
    <property type="evidence" value="ECO:0007669"/>
    <property type="project" value="UniProtKB-SubCell"/>
</dbReference>
<dbReference type="GO" id="GO:0001664">
    <property type="term" value="F:G protein-coupled receptor binding"/>
    <property type="evidence" value="ECO:0007669"/>
    <property type="project" value="TreeGrafter"/>
</dbReference>
<dbReference type="GO" id="GO:0031683">
    <property type="term" value="F:G-protein beta/gamma-subunit complex binding"/>
    <property type="evidence" value="ECO:0007669"/>
    <property type="project" value="InterPro"/>
</dbReference>
<dbReference type="GO" id="GO:0005525">
    <property type="term" value="F:GTP binding"/>
    <property type="evidence" value="ECO:0007669"/>
    <property type="project" value="UniProtKB-KW"/>
</dbReference>
<dbReference type="GO" id="GO:0003924">
    <property type="term" value="F:GTPase activity"/>
    <property type="evidence" value="ECO:0007669"/>
    <property type="project" value="InterPro"/>
</dbReference>
<dbReference type="GO" id="GO:0007188">
    <property type="term" value="P:adenylate cyclase-modulating G protein-coupled receptor signaling pathway"/>
    <property type="evidence" value="ECO:0007669"/>
    <property type="project" value="TreeGrafter"/>
</dbReference>
<dbReference type="CDD" id="cd00066">
    <property type="entry name" value="G-alpha"/>
    <property type="match status" value="1"/>
</dbReference>
<dbReference type="FunFam" id="1.10.400.10:FF:000010">
    <property type="entry name" value="Guanine nucleotide-binding protein alpha-13 subunit"/>
    <property type="match status" value="1"/>
</dbReference>
<dbReference type="FunFam" id="3.40.50.300:FF:000692">
    <property type="entry name" value="Guanine nucleotide-binding protein subunit alpha"/>
    <property type="match status" value="1"/>
</dbReference>
<dbReference type="Gene3D" id="1.10.400.10">
    <property type="entry name" value="GI Alpha 1, domain 2-like"/>
    <property type="match status" value="1"/>
</dbReference>
<dbReference type="Gene3D" id="3.40.50.300">
    <property type="entry name" value="P-loop containing nucleotide triphosphate hydrolases"/>
    <property type="match status" value="1"/>
</dbReference>
<dbReference type="InterPro" id="IPR001019">
    <property type="entry name" value="Gprotein_alpha_su"/>
</dbReference>
<dbReference type="InterPro" id="IPR011025">
    <property type="entry name" value="GproteinA_insert"/>
</dbReference>
<dbReference type="InterPro" id="IPR027417">
    <property type="entry name" value="P-loop_NTPase"/>
</dbReference>
<dbReference type="PANTHER" id="PTHR10218">
    <property type="entry name" value="GTP-BINDING PROTEIN ALPHA SUBUNIT"/>
    <property type="match status" value="1"/>
</dbReference>
<dbReference type="PANTHER" id="PTHR10218:SF302">
    <property type="entry name" value="GUANINE NUCLEOTIDE-BINDING PROTEIN ALPHA-5 SUBUNIT"/>
    <property type="match status" value="1"/>
</dbReference>
<dbReference type="Pfam" id="PF00503">
    <property type="entry name" value="G-alpha"/>
    <property type="match status" value="1"/>
</dbReference>
<dbReference type="PRINTS" id="PR00318">
    <property type="entry name" value="GPROTEINA"/>
</dbReference>
<dbReference type="SMART" id="SM00275">
    <property type="entry name" value="G_alpha"/>
    <property type="match status" value="1"/>
</dbReference>
<dbReference type="SUPFAM" id="SSF52540">
    <property type="entry name" value="P-loop containing nucleoside triphosphate hydrolases"/>
    <property type="match status" value="1"/>
</dbReference>
<dbReference type="SUPFAM" id="SSF47895">
    <property type="entry name" value="Transducin (alpha subunit), insertion domain"/>
    <property type="match status" value="1"/>
</dbReference>
<dbReference type="PROSITE" id="PS51882">
    <property type="entry name" value="G_ALPHA"/>
    <property type="match status" value="1"/>
</dbReference>
<keyword id="KW-0963">Cytoplasm</keyword>
<keyword id="KW-0342">GTP-binding</keyword>
<keyword id="KW-0378">Hydrolase</keyword>
<keyword id="KW-0449">Lipoprotein</keyword>
<keyword id="KW-0460">Magnesium</keyword>
<keyword id="KW-0472">Membrane</keyword>
<keyword id="KW-0479">Metal-binding</keyword>
<keyword id="KW-0519">Myristate</keyword>
<keyword id="KW-0547">Nucleotide-binding</keyword>
<keyword id="KW-0564">Palmitate</keyword>
<keyword id="KW-0807">Transducer</keyword>
<comment type="function">
    <text evidence="1">Guanine nucleotide-binding proteins (G proteins) are involved as modulators or transducers in various transmembrane signaling systems.</text>
</comment>
<comment type="cofactor">
    <cofactor evidence="3">
        <name>Mg(2+)</name>
        <dbReference type="ChEBI" id="CHEBI:18420"/>
    </cofactor>
</comment>
<comment type="subunit">
    <text>G proteins are composed of 3 units; alpha, beta and gamma. The alpha chain contains the guanine nucleotide binding site.</text>
</comment>
<comment type="subcellular location">
    <subcellularLocation>
        <location>Cytoplasm</location>
    </subcellularLocation>
    <subcellularLocation>
        <location>Cytoplasm</location>
        <location>Perinuclear region</location>
    </subcellularLocation>
    <subcellularLocation>
        <location>Endomembrane system</location>
        <topology>Lipid-anchor</topology>
    </subcellularLocation>
    <text>Predominantly perinuclear.</text>
</comment>
<comment type="similarity">
    <text evidence="7">Belongs to the G-alpha family.</text>
</comment>
<protein>
    <recommendedName>
        <fullName>Guanine nucleotide-binding protein subunit alpha-1</fullName>
        <shortName>G alpha-1</shortName>
    </recommendedName>
    <alternativeName>
        <fullName>GTP-binding protein subunit alpha 1</fullName>
    </alternativeName>
</protein>